<keyword id="KW-0067">ATP-binding</keyword>
<keyword id="KW-1015">Disulfide bond</keyword>
<keyword id="KW-0418">Kinase</keyword>
<keyword id="KW-0460">Magnesium</keyword>
<keyword id="KW-0547">Nucleotide-binding</keyword>
<keyword id="KW-0684">Rhamnose metabolism</keyword>
<keyword id="KW-0808">Transferase</keyword>
<accession>C6DJR3</accession>
<comment type="function">
    <text evidence="1">Involved in the catabolism of L-rhamnose (6-deoxy-L-mannose). Catalyzes the transfer of the gamma-phosphate group from ATP to the 1-hydroxyl group of L-rhamnulose to yield L-rhamnulose 1-phosphate.</text>
</comment>
<comment type="catalytic activity">
    <reaction evidence="1">
        <text>L-rhamnulose + ATP = L-rhamnulose 1-phosphate + ADP + H(+)</text>
        <dbReference type="Rhea" id="RHEA:20117"/>
        <dbReference type="ChEBI" id="CHEBI:15378"/>
        <dbReference type="ChEBI" id="CHEBI:17897"/>
        <dbReference type="ChEBI" id="CHEBI:30616"/>
        <dbReference type="ChEBI" id="CHEBI:58313"/>
        <dbReference type="ChEBI" id="CHEBI:456216"/>
        <dbReference type="EC" id="2.7.1.5"/>
    </reaction>
</comment>
<comment type="cofactor">
    <cofactor evidence="1">
        <name>Mg(2+)</name>
        <dbReference type="ChEBI" id="CHEBI:18420"/>
    </cofactor>
</comment>
<comment type="pathway">
    <text evidence="1">Carbohydrate degradation; L-rhamnose degradation; glycerone phosphate from L-rhamnose: step 2/3.</text>
</comment>
<comment type="similarity">
    <text evidence="1">Belongs to the rhamnulokinase family.</text>
</comment>
<evidence type="ECO:0000255" key="1">
    <source>
        <dbReference type="HAMAP-Rule" id="MF_01535"/>
    </source>
</evidence>
<name>RHAB_PECCP</name>
<organism>
    <name type="scientific">Pectobacterium carotovorum subsp. carotovorum (strain PC1)</name>
    <dbReference type="NCBI Taxonomy" id="561230"/>
    <lineage>
        <taxon>Bacteria</taxon>
        <taxon>Pseudomonadati</taxon>
        <taxon>Pseudomonadota</taxon>
        <taxon>Gammaproteobacteria</taxon>
        <taxon>Enterobacterales</taxon>
        <taxon>Pectobacteriaceae</taxon>
        <taxon>Pectobacterium</taxon>
    </lineage>
</organism>
<sequence>MAVKNIVAVDLGASSGRVMLATLHTATQHLTLKEIHRFSNTLVFQDNHHQWDLAALERDILTGLHQIDAMGIVPDSIGIDSWGVDYVLLDQDGQRVGLPYSYRDHRTDGVMATVTAELGREAIYQRTGIQFLPFNTLYQLKALCDAPSDDLHQVAHLLMIPDYFHYRLTGSLVCEYTNASTTQLLSLEKKTWDSELLDYLGVPRRWLSDPVQPGHAVGKWAAPSGRQISVTAVATHDTASAVVGAPLQSRDSAYLSSGTWSLMGIESDTPFNSPQALAANITNEGGVDGTYRVLKNIMGLWLLQRVCQERDIKDLGALIEAAAALPAFASLINPNDDRFINPPSMHQAIRDYCREHGQPVPHSDAELARCIFDSLALLYRQVVLELGELRHAPIRQLHIVGGGSQNAFLNQLCADVCQIPVLAGPVEASTLGNIGCQLMALGAVADLAAFRHMLTHNFPLHRYTPRAESDFAGHWRRFQALSQPETAPKGKKETTQ</sequence>
<gene>
    <name evidence="1" type="primary">rhaB</name>
    <name type="ordered locus">PC1_0420</name>
</gene>
<reference key="1">
    <citation type="submission" date="2009-07" db="EMBL/GenBank/DDBJ databases">
        <title>Complete sequence of Pectobacterium carotovorum subsp. carotovorum PC1.</title>
        <authorList>
            <consortium name="US DOE Joint Genome Institute"/>
            <person name="Lucas S."/>
            <person name="Copeland A."/>
            <person name="Lapidus A."/>
            <person name="Glavina del Rio T."/>
            <person name="Tice H."/>
            <person name="Bruce D."/>
            <person name="Goodwin L."/>
            <person name="Pitluck S."/>
            <person name="Munk A.C."/>
            <person name="Brettin T."/>
            <person name="Detter J.C."/>
            <person name="Han C."/>
            <person name="Tapia R."/>
            <person name="Larimer F."/>
            <person name="Land M."/>
            <person name="Hauser L."/>
            <person name="Kyrpides N."/>
            <person name="Mikhailova N."/>
            <person name="Balakrishnan V."/>
            <person name="Glasner J."/>
            <person name="Perna N.T."/>
        </authorList>
    </citation>
    <scope>NUCLEOTIDE SEQUENCE [LARGE SCALE GENOMIC DNA]</scope>
    <source>
        <strain>PC1</strain>
    </source>
</reference>
<feature type="chain" id="PRO_1000215408" description="Rhamnulokinase">
    <location>
        <begin position="1"/>
        <end position="496"/>
    </location>
</feature>
<feature type="active site" description="Proton acceptor" evidence="1">
    <location>
        <position position="237"/>
    </location>
</feature>
<feature type="binding site" evidence="1">
    <location>
        <begin position="13"/>
        <end position="17"/>
    </location>
    <ligand>
        <name>ATP</name>
        <dbReference type="ChEBI" id="CHEBI:30616"/>
    </ligand>
</feature>
<feature type="binding site" evidence="1">
    <location>
        <position position="83"/>
    </location>
    <ligand>
        <name>substrate</name>
    </ligand>
</feature>
<feature type="binding site" evidence="1">
    <location>
        <begin position="236"/>
        <end position="238"/>
    </location>
    <ligand>
        <name>substrate</name>
    </ligand>
</feature>
<feature type="binding site" evidence="1">
    <location>
        <position position="259"/>
    </location>
    <ligand>
        <name>ATP</name>
        <dbReference type="ChEBI" id="CHEBI:30616"/>
    </ligand>
</feature>
<feature type="binding site" evidence="1">
    <location>
        <position position="296"/>
    </location>
    <ligand>
        <name>substrate</name>
    </ligand>
</feature>
<feature type="binding site" evidence="1">
    <location>
        <position position="304"/>
    </location>
    <ligand>
        <name>ATP</name>
        <dbReference type="ChEBI" id="CHEBI:30616"/>
    </ligand>
</feature>
<feature type="binding site" evidence="1">
    <location>
        <position position="402"/>
    </location>
    <ligand>
        <name>ATP</name>
        <dbReference type="ChEBI" id="CHEBI:30616"/>
    </ligand>
</feature>
<feature type="disulfide bond" evidence="1">
    <location>
        <begin position="353"/>
        <end position="370"/>
    </location>
</feature>
<feature type="disulfide bond" evidence="1">
    <location>
        <begin position="413"/>
        <end position="417"/>
    </location>
</feature>
<protein>
    <recommendedName>
        <fullName evidence="1">Rhamnulokinase</fullName>
        <shortName evidence="1">RhaB</shortName>
        <ecNumber evidence="1">2.7.1.5</ecNumber>
    </recommendedName>
    <alternativeName>
        <fullName evidence="1">ATP:L-rhamnulose phosphotransferase</fullName>
    </alternativeName>
    <alternativeName>
        <fullName evidence="1">L-rhamnulose 1-kinase</fullName>
    </alternativeName>
    <alternativeName>
        <fullName evidence="1">Rhamnulose kinase</fullName>
    </alternativeName>
</protein>
<dbReference type="EC" id="2.7.1.5" evidence="1"/>
<dbReference type="EMBL" id="CP001657">
    <property type="protein sequence ID" value="ACT11476.1"/>
    <property type="molecule type" value="Genomic_DNA"/>
</dbReference>
<dbReference type="RefSeq" id="WP_012773132.1">
    <property type="nucleotide sequence ID" value="NC_012917.1"/>
</dbReference>
<dbReference type="SMR" id="C6DJR3"/>
<dbReference type="STRING" id="561230.PC1_0420"/>
<dbReference type="KEGG" id="pct:PC1_0420"/>
<dbReference type="eggNOG" id="COG1070">
    <property type="taxonomic scope" value="Bacteria"/>
</dbReference>
<dbReference type="HOGENOM" id="CLU_039395_0_0_6"/>
<dbReference type="OrthoDB" id="9761504at2"/>
<dbReference type="UniPathway" id="UPA00541">
    <property type="reaction ID" value="UER00602"/>
</dbReference>
<dbReference type="Proteomes" id="UP000002736">
    <property type="component" value="Chromosome"/>
</dbReference>
<dbReference type="GO" id="GO:0005829">
    <property type="term" value="C:cytosol"/>
    <property type="evidence" value="ECO:0007669"/>
    <property type="project" value="TreeGrafter"/>
</dbReference>
<dbReference type="GO" id="GO:0005524">
    <property type="term" value="F:ATP binding"/>
    <property type="evidence" value="ECO:0007669"/>
    <property type="project" value="UniProtKB-KW"/>
</dbReference>
<dbReference type="GO" id="GO:0004370">
    <property type="term" value="F:glycerol kinase activity"/>
    <property type="evidence" value="ECO:0007669"/>
    <property type="project" value="TreeGrafter"/>
</dbReference>
<dbReference type="GO" id="GO:0008993">
    <property type="term" value="F:rhamnulokinase activity"/>
    <property type="evidence" value="ECO:0007669"/>
    <property type="project" value="UniProtKB-UniRule"/>
</dbReference>
<dbReference type="GO" id="GO:0006071">
    <property type="term" value="P:glycerol metabolic process"/>
    <property type="evidence" value="ECO:0007669"/>
    <property type="project" value="TreeGrafter"/>
</dbReference>
<dbReference type="GO" id="GO:0019301">
    <property type="term" value="P:rhamnose catabolic process"/>
    <property type="evidence" value="ECO:0007669"/>
    <property type="project" value="UniProtKB-UniRule"/>
</dbReference>
<dbReference type="CDD" id="cd07771">
    <property type="entry name" value="ASKHA_NBD_FGGY_RhaB-like"/>
    <property type="match status" value="1"/>
</dbReference>
<dbReference type="FunFam" id="3.30.420.40:FF:000064">
    <property type="entry name" value="Rhamnulokinase"/>
    <property type="match status" value="1"/>
</dbReference>
<dbReference type="FunFam" id="3.30.420.40:FF:000073">
    <property type="entry name" value="Rhamnulokinase"/>
    <property type="match status" value="1"/>
</dbReference>
<dbReference type="Gene3D" id="3.30.420.40">
    <property type="match status" value="2"/>
</dbReference>
<dbReference type="HAMAP" id="MF_01535">
    <property type="entry name" value="Rhamnulokinase"/>
    <property type="match status" value="1"/>
</dbReference>
<dbReference type="InterPro" id="IPR043129">
    <property type="entry name" value="ATPase_NBD"/>
</dbReference>
<dbReference type="InterPro" id="IPR000577">
    <property type="entry name" value="Carb_kinase_FGGY"/>
</dbReference>
<dbReference type="InterPro" id="IPR018485">
    <property type="entry name" value="FGGY_C"/>
</dbReference>
<dbReference type="InterPro" id="IPR018484">
    <property type="entry name" value="FGGY_N"/>
</dbReference>
<dbReference type="InterPro" id="IPR013449">
    <property type="entry name" value="Rhamnulokinase"/>
</dbReference>
<dbReference type="NCBIfam" id="NF007925">
    <property type="entry name" value="PRK10640.1"/>
    <property type="match status" value="1"/>
</dbReference>
<dbReference type="NCBIfam" id="TIGR02627">
    <property type="entry name" value="rhamnulo_kin"/>
    <property type="match status" value="1"/>
</dbReference>
<dbReference type="PANTHER" id="PTHR10196:SF93">
    <property type="entry name" value="L-RHAMNULOKINASE"/>
    <property type="match status" value="1"/>
</dbReference>
<dbReference type="PANTHER" id="PTHR10196">
    <property type="entry name" value="SUGAR KINASE"/>
    <property type="match status" value="1"/>
</dbReference>
<dbReference type="Pfam" id="PF02782">
    <property type="entry name" value="FGGY_C"/>
    <property type="match status" value="1"/>
</dbReference>
<dbReference type="Pfam" id="PF00370">
    <property type="entry name" value="FGGY_N"/>
    <property type="match status" value="1"/>
</dbReference>
<dbReference type="PIRSF" id="PIRSF000538">
    <property type="entry name" value="GlpK"/>
    <property type="match status" value="1"/>
</dbReference>
<dbReference type="SUPFAM" id="SSF53067">
    <property type="entry name" value="Actin-like ATPase domain"/>
    <property type="match status" value="2"/>
</dbReference>
<proteinExistence type="inferred from homology"/>